<accession>Q9TLQ5</accession>
<gene>
    <name evidence="1" type="primary">psaA</name>
</gene>
<comment type="function">
    <text>PsaA and PsaB bind P700, the primary electron donor of photosystem I (PSI), as well as the electron acceptors A0, A1 and FX. PSI is a plastocyanin/cytochrome c6-ferredoxin oxidoreductase, converting photonic excitation into a charge separation, which transfers an electron from the donor P700 chlorophyll pair to the spectroscopically characterized acceptors A0, A1, FX, FA and FB in turn. Oxidized P700 is reduced on the lumenal side of the thylakoid membrane by plastocyanin or cytochrome c6.</text>
</comment>
<comment type="catalytic activity">
    <reaction evidence="1">
        <text>reduced [plastocyanin] + hnu + oxidized [2Fe-2S]-[ferredoxin] = oxidized [plastocyanin] + reduced [2Fe-2S]-[ferredoxin]</text>
        <dbReference type="Rhea" id="RHEA:30407"/>
        <dbReference type="Rhea" id="RHEA-COMP:10000"/>
        <dbReference type="Rhea" id="RHEA-COMP:10001"/>
        <dbReference type="Rhea" id="RHEA-COMP:10039"/>
        <dbReference type="Rhea" id="RHEA-COMP:10040"/>
        <dbReference type="ChEBI" id="CHEBI:29036"/>
        <dbReference type="ChEBI" id="CHEBI:30212"/>
        <dbReference type="ChEBI" id="CHEBI:33737"/>
        <dbReference type="ChEBI" id="CHEBI:33738"/>
        <dbReference type="ChEBI" id="CHEBI:49552"/>
        <dbReference type="EC" id="1.97.1.12"/>
    </reaction>
</comment>
<comment type="cofactor">
    <text evidence="1">P700 is a chlorophyll a/chlorophyll a' dimer, A0 is one or more chlorophyll a, A1 is one or both phylloquinones and FX is a shared 4Fe-4S iron-sulfur center.</text>
</comment>
<comment type="subunit">
    <text evidence="1">The PsaA/B heterodimer binds the P700 chlorophyll special pair and subsequent electron acceptors. PSI consists of a core antenna complex that captures photons, and an electron transfer chain that converts photonic excitation into a charge separation. The eukaryotic PSI reaction center is composed of at least 11 subunits.</text>
</comment>
<comment type="subcellular location">
    <subcellularLocation>
        <location evidence="1">Plastid</location>
        <location evidence="1">Chloroplast thylakoid membrane</location>
        <topology evidence="1">Multi-pass membrane protein</topology>
    </subcellularLocation>
</comment>
<comment type="similarity">
    <text evidence="1">Belongs to the PsaA/PsaB family.</text>
</comment>
<reference key="1">
    <citation type="journal article" date="2000" name="J. Mol. Evol.">
        <title>The structure and gene repertoire of an ancient red algal plastid genome.</title>
        <authorList>
            <person name="Gloeckner G."/>
            <person name="Rosenthal A."/>
            <person name="Valentin K.-U."/>
        </authorList>
    </citation>
    <scope>NUCLEOTIDE SEQUENCE [LARGE SCALE GENOMIC DNA]</scope>
    <source>
        <strain>RK-1</strain>
    </source>
</reference>
<organism>
    <name type="scientific">Cyanidium caldarium</name>
    <name type="common">Red alga</name>
    <dbReference type="NCBI Taxonomy" id="2771"/>
    <lineage>
        <taxon>Eukaryota</taxon>
        <taxon>Rhodophyta</taxon>
        <taxon>Bangiophyceae</taxon>
        <taxon>Cyanidiales</taxon>
        <taxon>Cyanidiaceae</taxon>
        <taxon>Cyanidium</taxon>
    </lineage>
</organism>
<sequence length="752" mass="83892">MNQILKEKEQKTAKILVDRNPVPTSFEKWGVPGHFSRSLAKGPKTTTWIWNLHADVHDFDSHTSSLEDISRKIFSAHFGQLSLIFIWLSGMYFHGARFSNYTIWLSNPSLIKPSAQIVWPIVGQEILNADLGGGSQGIQITSGFFHLWRASGITNELELYVTALGGLFMAGLMAFGGWFHYHKAAPKLEWFQNVESMLNHHLAGLLGLGSLSWAGHQIHVSLPINKLLDAGVDPKTIPLPHEFILNRELMSQLYPSFEKGLWPFFSLNWGAYSDFLTFRGGLNPITGSLWMSDIAHHHLAISVLFIVAGHMYRTNWGIGHSIKEILDAHRGPLTGSGHRGLYEALTTSWHANLAINLALFGSLSIIVAHHMYAMPPYPYISIDYPTQLSLFTHHTWIGGFCIVGASAHGAIFMIRDYVPSQHYNNVLDRLIRHRDALISHLNWVCIFLGTHSFGLYIHNDTMRALGRSQDMFSDTAIQLQPIFAQWIQSLHTLAPANTAPNALATTSYVFGGEVVAVANKIAMMPMKLGTADFMVHHIHAFTIHVTLLILLKGVLFARNSRLIPDKANLGFRFPCDGPGRGGTCQVSSWDHVFLGLFWMYNCISVVIFHFSWKMQSDVWGTVSQNSLVSHVVGGNFSQSAITINGWLRDFLWAQASQVIQSYGSSISAYGLMFLAAHFIWAFSLMFLFSGRGYWQELIESIVWAHSKLKIAPTIQPRALSITQGRAVGAAHYLLGGIATTWAFFLSRAISIG</sequence>
<proteinExistence type="inferred from homology"/>
<feature type="chain" id="PRO_0000088541" description="Photosystem I P700 chlorophyll a apoprotein A1">
    <location>
        <begin position="1"/>
        <end position="752"/>
    </location>
</feature>
<feature type="transmembrane region" description="Helical; Name=I" evidence="1">
    <location>
        <begin position="73"/>
        <end position="96"/>
    </location>
</feature>
<feature type="transmembrane region" description="Helical; Name=II" evidence="1">
    <location>
        <begin position="159"/>
        <end position="182"/>
    </location>
</feature>
<feature type="transmembrane region" description="Helical; Name=III" evidence="1">
    <location>
        <begin position="198"/>
        <end position="222"/>
    </location>
</feature>
<feature type="transmembrane region" description="Helical; Name=IV" evidence="1">
    <location>
        <begin position="294"/>
        <end position="312"/>
    </location>
</feature>
<feature type="transmembrane region" description="Helical; Name=V" evidence="1">
    <location>
        <begin position="349"/>
        <end position="372"/>
    </location>
</feature>
<feature type="transmembrane region" description="Helical; Name=VI" evidence="1">
    <location>
        <begin position="388"/>
        <end position="414"/>
    </location>
</feature>
<feature type="transmembrane region" description="Helical; Name=VII" evidence="1">
    <location>
        <begin position="436"/>
        <end position="458"/>
    </location>
</feature>
<feature type="transmembrane region" description="Helical; Name=VIII" evidence="1">
    <location>
        <begin position="533"/>
        <end position="551"/>
    </location>
</feature>
<feature type="transmembrane region" description="Helical; Name=IX" evidence="1">
    <location>
        <begin position="591"/>
        <end position="612"/>
    </location>
</feature>
<feature type="transmembrane region" description="Helical; Name=X" evidence="1">
    <location>
        <begin position="666"/>
        <end position="688"/>
    </location>
</feature>
<feature type="transmembrane region" description="Helical; Name=XI" evidence="1">
    <location>
        <begin position="726"/>
        <end position="746"/>
    </location>
</feature>
<feature type="binding site" evidence="1">
    <location>
        <position position="575"/>
    </location>
    <ligand>
        <name>[4Fe-4S] cluster</name>
        <dbReference type="ChEBI" id="CHEBI:49883"/>
        <note>ligand shared between dimeric partners</note>
    </ligand>
</feature>
<feature type="binding site" evidence="1">
    <location>
        <position position="584"/>
    </location>
    <ligand>
        <name>[4Fe-4S] cluster</name>
        <dbReference type="ChEBI" id="CHEBI:49883"/>
        <note>ligand shared between dimeric partners</note>
    </ligand>
</feature>
<feature type="binding site" description="axial binding residue" evidence="1">
    <location>
        <position position="677"/>
    </location>
    <ligand>
        <name>chlorophyll a'</name>
        <dbReference type="ChEBI" id="CHEBI:189419"/>
        <label>A1</label>
    </ligand>
    <ligandPart>
        <name>Mg</name>
        <dbReference type="ChEBI" id="CHEBI:25107"/>
    </ligandPart>
</feature>
<feature type="binding site" description="axial binding residue" evidence="1">
    <location>
        <position position="685"/>
    </location>
    <ligand>
        <name>chlorophyll a</name>
        <dbReference type="ChEBI" id="CHEBI:58416"/>
        <label>A3</label>
    </ligand>
    <ligandPart>
        <name>Mg</name>
        <dbReference type="ChEBI" id="CHEBI:25107"/>
    </ligandPart>
</feature>
<feature type="binding site" evidence="1">
    <location>
        <position position="693"/>
    </location>
    <ligand>
        <name>chlorophyll a</name>
        <dbReference type="ChEBI" id="CHEBI:58416"/>
        <label>A3</label>
    </ligand>
</feature>
<feature type="binding site" evidence="1">
    <location>
        <position position="694"/>
    </location>
    <ligand>
        <name>phylloquinone</name>
        <dbReference type="ChEBI" id="CHEBI:18067"/>
        <label>A</label>
    </ligand>
</feature>
<dbReference type="EC" id="1.97.1.12" evidence="1"/>
<dbReference type="EMBL" id="AF022186">
    <property type="protein sequence ID" value="AAF12880.1"/>
    <property type="molecule type" value="Genomic_DNA"/>
</dbReference>
<dbReference type="RefSeq" id="NP_045214.1">
    <property type="nucleotide sequence ID" value="NC_001840.1"/>
</dbReference>
<dbReference type="EMDB" id="EMD-37480"/>
<dbReference type="SMR" id="Q9TLQ5"/>
<dbReference type="GeneID" id="800288"/>
<dbReference type="GO" id="GO:0009535">
    <property type="term" value="C:chloroplast thylakoid membrane"/>
    <property type="evidence" value="ECO:0007669"/>
    <property type="project" value="UniProtKB-SubCell"/>
</dbReference>
<dbReference type="GO" id="GO:0009522">
    <property type="term" value="C:photosystem I"/>
    <property type="evidence" value="ECO:0007669"/>
    <property type="project" value="UniProtKB-KW"/>
</dbReference>
<dbReference type="GO" id="GO:0051539">
    <property type="term" value="F:4 iron, 4 sulfur cluster binding"/>
    <property type="evidence" value="ECO:0007669"/>
    <property type="project" value="UniProtKB-KW"/>
</dbReference>
<dbReference type="GO" id="GO:0016168">
    <property type="term" value="F:chlorophyll binding"/>
    <property type="evidence" value="ECO:0007669"/>
    <property type="project" value="UniProtKB-KW"/>
</dbReference>
<dbReference type="GO" id="GO:0009055">
    <property type="term" value="F:electron transfer activity"/>
    <property type="evidence" value="ECO:0007669"/>
    <property type="project" value="UniProtKB-UniRule"/>
</dbReference>
<dbReference type="GO" id="GO:0000287">
    <property type="term" value="F:magnesium ion binding"/>
    <property type="evidence" value="ECO:0007669"/>
    <property type="project" value="UniProtKB-UniRule"/>
</dbReference>
<dbReference type="GO" id="GO:0016491">
    <property type="term" value="F:oxidoreductase activity"/>
    <property type="evidence" value="ECO:0007669"/>
    <property type="project" value="UniProtKB-KW"/>
</dbReference>
<dbReference type="GO" id="GO:0015979">
    <property type="term" value="P:photosynthesis"/>
    <property type="evidence" value="ECO:0007669"/>
    <property type="project" value="UniProtKB-UniRule"/>
</dbReference>
<dbReference type="Gene3D" id="1.20.1130.10">
    <property type="entry name" value="Photosystem I PsaA/PsaB"/>
    <property type="match status" value="1"/>
</dbReference>
<dbReference type="HAMAP" id="MF_00458">
    <property type="entry name" value="PSI_PsaA"/>
    <property type="match status" value="1"/>
</dbReference>
<dbReference type="InterPro" id="IPR006243">
    <property type="entry name" value="PSI_PsaA"/>
</dbReference>
<dbReference type="InterPro" id="IPR001280">
    <property type="entry name" value="PSI_PsaA/B"/>
</dbReference>
<dbReference type="InterPro" id="IPR020586">
    <property type="entry name" value="PSI_PsaA/B_CS"/>
</dbReference>
<dbReference type="InterPro" id="IPR036408">
    <property type="entry name" value="PSI_PsaA/B_sf"/>
</dbReference>
<dbReference type="NCBIfam" id="TIGR01335">
    <property type="entry name" value="psaA"/>
    <property type="match status" value="1"/>
</dbReference>
<dbReference type="PANTHER" id="PTHR30128">
    <property type="entry name" value="OUTER MEMBRANE PROTEIN, OMPA-RELATED"/>
    <property type="match status" value="1"/>
</dbReference>
<dbReference type="PANTHER" id="PTHR30128:SF19">
    <property type="entry name" value="PHOTOSYSTEM I P700 CHLOROPHYLL A APOPROTEIN A1-RELATED"/>
    <property type="match status" value="1"/>
</dbReference>
<dbReference type="Pfam" id="PF00223">
    <property type="entry name" value="PsaA_PsaB"/>
    <property type="match status" value="1"/>
</dbReference>
<dbReference type="PIRSF" id="PIRSF002905">
    <property type="entry name" value="PSI_A"/>
    <property type="match status" value="1"/>
</dbReference>
<dbReference type="PRINTS" id="PR00257">
    <property type="entry name" value="PHOTSYSPSAAB"/>
</dbReference>
<dbReference type="SUPFAM" id="SSF81558">
    <property type="entry name" value="Photosystem I subunits PsaA/PsaB"/>
    <property type="match status" value="1"/>
</dbReference>
<dbReference type="PROSITE" id="PS00419">
    <property type="entry name" value="PHOTOSYSTEM_I_PSAAB"/>
    <property type="match status" value="1"/>
</dbReference>
<keyword id="KW-0004">4Fe-4S</keyword>
<keyword id="KW-0148">Chlorophyll</keyword>
<keyword id="KW-0150">Chloroplast</keyword>
<keyword id="KW-0157">Chromophore</keyword>
<keyword id="KW-0249">Electron transport</keyword>
<keyword id="KW-0408">Iron</keyword>
<keyword id="KW-0411">Iron-sulfur</keyword>
<keyword id="KW-0460">Magnesium</keyword>
<keyword id="KW-0472">Membrane</keyword>
<keyword id="KW-0479">Metal-binding</keyword>
<keyword id="KW-0560">Oxidoreductase</keyword>
<keyword id="KW-0602">Photosynthesis</keyword>
<keyword id="KW-0603">Photosystem I</keyword>
<keyword id="KW-0934">Plastid</keyword>
<keyword id="KW-0793">Thylakoid</keyword>
<keyword id="KW-0812">Transmembrane</keyword>
<keyword id="KW-1133">Transmembrane helix</keyword>
<keyword id="KW-0813">Transport</keyword>
<protein>
    <recommendedName>
        <fullName evidence="1">Photosystem I P700 chlorophyll a apoprotein A1</fullName>
        <ecNumber evidence="1">1.97.1.12</ecNumber>
    </recommendedName>
    <alternativeName>
        <fullName evidence="1">PSI-A</fullName>
    </alternativeName>
    <alternativeName>
        <fullName evidence="1">PsaA</fullName>
    </alternativeName>
</protein>
<evidence type="ECO:0000255" key="1">
    <source>
        <dbReference type="HAMAP-Rule" id="MF_00458"/>
    </source>
</evidence>
<geneLocation type="chloroplast"/>
<name>PSAA_CYACA</name>